<evidence type="ECO:0000250" key="1">
    <source>
        <dbReference type="UniProtKB" id="P81450"/>
    </source>
</evidence>
<evidence type="ECO:0000250" key="2">
    <source>
        <dbReference type="UniProtKB" id="Q6C8S0"/>
    </source>
</evidence>
<evidence type="ECO:0000255" key="3"/>
<evidence type="ECO:0000269" key="4">
    <source>
    </source>
</evidence>
<evidence type="ECO:0000269" key="5">
    <source>
    </source>
</evidence>
<evidence type="ECO:0000269" key="6">
    <source ref="1"/>
</evidence>
<evidence type="ECO:0000303" key="7">
    <source>
    </source>
</evidence>
<evidence type="ECO:0000303" key="8">
    <source ref="1"/>
</evidence>
<evidence type="ECO:0000305" key="9"/>
<evidence type="ECO:0000305" key="10">
    <source>
    </source>
</evidence>
<comment type="function">
    <text evidence="2 4 5">Mitochondrial membrane ATP synthase (F(1)F(0) ATP synthase or Complex V) produces ATP from ADP in the presence of a proton gradient across the membrane which is generated by electron transport complexes of the respiratory chain (PubMed:25759169). F-type ATP synthases consist of two structural domains, F(1) - containing the extramembraneous catalytic core, and F(0) - containing the membrane proton channel, linked together by a central stalk and a peripheral stalk (PubMed:27791192). During catalysis, ATP synthesis in the catalytic domain of F(1) is coupled via a rotary mechanism of the central stalk subunits to proton translocation (By similarity). Part of the complex F(0) domain (PubMed:27791192). Minor subunit located with subunit a/ATP6 in the membrane (PubMed:27791192).</text>
</comment>
<comment type="subunit">
    <text evidence="2 4 5">F-type ATP synthases have 2 components, the catalytic core F(1) and the membrane-embedded component F(0), linked together by a central stalk and a peripheral stalk (PubMed:27791192). The central stalk, also called rotor shaft, is often seen as part of F(1) (PubMed:27791192). The peripheral stalk is seen as part of F(0). F(0) contains the membrane channel next to the rotor (PubMed:27791192). F-type ATP synthases form dimers but each monomer functions independently in ATP generation (By similarity). The dimer consists of 18 different polypeptides: ATP1 (subunit alpha, part of F(1), 3 molecules per monomer), ATP2 (subunit beta, part of F(1), 3 molecules per monomer), ATP3 (subunit gamma, part of the central stalk), ATP4 (subunit b, part of the peripheral stalk), ATP5/OSCP (subunit 5/OSCP, part of the peripheral stalk), ATP6 (subunit a, part of the peripheral stalk), ATP7 (subunit d, part of the peripheral stalk), ATP8 (subunit 8, part of the peripheral stalk), OLI1 (subunit c, part of the rotor, 10 molecules per monomer), ATP14 (subunit h, part of the peripheral stalk), ATP15 (subunit epsilon, part of the central stalk), ATP16 (subunit delta, part of the central stalk), ATP17 (subunit f, part of the peripheral stalk), ATP18 (subunit i/j, part of the peripheral stalk) (PubMed:25759169, PubMed:27791192). Dimer-specific subunits are ATP19 (subunit k, at interface between monomers), ATP20 (subunit g, at interface between monomers), TIM11 (subunit e, at interface between monomers) (By similarity). Also contains subunit L (PubMed:25759169).</text>
</comment>
<comment type="subcellular location">
    <subcellularLocation>
        <location evidence="10">Mitochondrion inner membrane</location>
        <topology evidence="3">Single-pass membrane protein</topology>
    </subcellularLocation>
    <text evidence="10">The F-type ATP synthase complex is anchored in the mitochondrial inner membrane via the F(0) domain with the F(1) domain and the peripheral stalk extending into the mitochondrial matrix.</text>
</comment>
<comment type="mass spectrometry"/>
<comment type="similarity">
    <text evidence="9">Belongs to the ATPase j subunit family.</text>
</comment>
<organism evidence="7">
    <name type="scientific">Pichia angusta</name>
    <name type="common">Yeast</name>
    <name type="synonym">Hansenula polymorpha</name>
    <dbReference type="NCBI Taxonomy" id="870730"/>
    <lineage>
        <taxon>Eukaryota</taxon>
        <taxon>Fungi</taxon>
        <taxon>Dikarya</taxon>
        <taxon>Ascomycota</taxon>
        <taxon>Saccharomycotina</taxon>
        <taxon>Pichiomycetes</taxon>
        <taxon>Pichiales</taxon>
        <taxon>Pichiaceae</taxon>
        <taxon>Ogataea</taxon>
    </lineage>
</organism>
<sequence>MKFLGVKVYRFPLVKYYWPFFVGFGLTFYGVAKIQNAMMDTAEFINDPRHPRFKKGDLEKK</sequence>
<feature type="chain" id="PRO_0000445327" description="ATP synthase subunit J, mitochondrial" evidence="6">
    <location>
        <begin position="1"/>
        <end position="61"/>
    </location>
</feature>
<feature type="transmembrane region" description="Helical" evidence="3">
    <location>
        <begin position="13"/>
        <end position="32"/>
    </location>
</feature>
<name>ATP18_PICAN</name>
<keyword id="KW-0066">ATP synthesis</keyword>
<keyword id="KW-0138">CF(0)</keyword>
<keyword id="KW-0903">Direct protein sequencing</keyword>
<keyword id="KW-0375">Hydrogen ion transport</keyword>
<keyword id="KW-0406">Ion transport</keyword>
<keyword id="KW-0472">Membrane</keyword>
<keyword id="KW-0496">Mitochondrion</keyword>
<keyword id="KW-0999">Mitochondrion inner membrane</keyword>
<keyword id="KW-0812">Transmembrane</keyword>
<keyword id="KW-1133">Transmembrane helix</keyword>
<keyword id="KW-0813">Transport</keyword>
<accession>C0HK65</accession>
<reference evidence="9" key="1">
    <citation type="submission" date="2016-08" db="UniProtKB">
        <authorList>
            <person name="Fearnley I.M."/>
        </authorList>
    </citation>
    <scope>PARTIAL PROTEIN SEQUENCE</scope>
    <source>
        <strain evidence="8">A16 / NCYC 2310</strain>
    </source>
</reference>
<reference evidence="9" key="2">
    <citation type="journal article" date="2015" name="Biochem. J.">
        <title>The purification and characterization of ATP synthase complexes from the mitochondria of four fungal species.</title>
        <authorList>
            <person name="Liu S."/>
            <person name="Charlesworth T.J."/>
            <person name="Bason J.V."/>
            <person name="Montgomery M.G."/>
            <person name="Harbour M.E."/>
            <person name="Fearnley I.M."/>
            <person name="Walker J.E."/>
        </authorList>
    </citation>
    <scope>PROTEIN SEQUENCE OF 1-7</scope>
    <scope>IDENTIFICATION IN ATP SYNTHASE COMPLEX</scope>
    <scope>FUNCTION OF ATPASE COMPLEX</scope>
    <scope>SUBUNIT</scope>
    <scope>SUBCELLULAR LOCATION</scope>
    <scope>MASS SPECTROMETRY</scope>
    <scope>IDENTIFICATION BY MASS SPECTROMETRY</scope>
    <source>
        <strain evidence="7">A16 / NCYC 2310</strain>
    </source>
</reference>
<reference evidence="9" key="3">
    <citation type="journal article" date="2016" name="Proc. Natl. Acad. Sci. U.S.A.">
        <title>Structure of the mitochondrial ATP synthase from Pichia angusta determined by electron cryo-microscopy.</title>
        <authorList>
            <person name="Vinothkumar K.R."/>
            <person name="Montgomery M.G."/>
            <person name="Liu S."/>
            <person name="Walker J.E."/>
        </authorList>
    </citation>
    <scope>STRUCTURE BY ELECTRON MICROSCOPY (7.0 ANGSTROMS) OF MONOMERIC ATP SYNTHASE COMPLEX IN COMPLEX WITH BOVINE ATPIF1</scope>
    <scope>FUNCTION</scope>
    <scope>SUBUNIT</scope>
    <scope>SUBCELLULAR LOCATION</scope>
</reference>
<gene>
    <name evidence="1" type="primary">ATP18</name>
</gene>
<dbReference type="SMR" id="C0HK65"/>
<dbReference type="GO" id="GO:0005743">
    <property type="term" value="C:mitochondrial inner membrane"/>
    <property type="evidence" value="ECO:0007669"/>
    <property type="project" value="UniProtKB-SubCell"/>
</dbReference>
<dbReference type="GO" id="GO:0045259">
    <property type="term" value="C:proton-transporting ATP synthase complex"/>
    <property type="evidence" value="ECO:0007669"/>
    <property type="project" value="UniProtKB-KW"/>
</dbReference>
<dbReference type="GO" id="GO:0046933">
    <property type="term" value="F:proton-transporting ATP synthase activity, rotational mechanism"/>
    <property type="evidence" value="ECO:0007669"/>
    <property type="project" value="TreeGrafter"/>
</dbReference>
<dbReference type="InterPro" id="IPR006995">
    <property type="entry name" value="ATP_synth_F0_jsu"/>
</dbReference>
<dbReference type="PANTHER" id="PTHR28060">
    <property type="entry name" value="ATP SYNTHASE SUBUNIT J, MITOCHONDRIAL"/>
    <property type="match status" value="1"/>
</dbReference>
<dbReference type="PANTHER" id="PTHR28060:SF1">
    <property type="entry name" value="ATP SYNTHASE SUBUNIT J, MITOCHONDRIAL"/>
    <property type="match status" value="1"/>
</dbReference>
<dbReference type="Pfam" id="PF04911">
    <property type="entry name" value="ATP-synt_J"/>
    <property type="match status" value="1"/>
</dbReference>
<proteinExistence type="evidence at protein level"/>
<protein>
    <recommendedName>
        <fullName evidence="1">ATP synthase subunit J, mitochondrial</fullName>
    </recommendedName>
    <alternativeName>
        <fullName evidence="1">ATPase synthase I subunit</fullName>
    </alternativeName>
</protein>